<evidence type="ECO:0000255" key="1">
    <source>
        <dbReference type="HAMAP-Rule" id="MF_01220"/>
    </source>
</evidence>
<gene>
    <name evidence="1" type="primary">pyrH</name>
    <name type="ordered locus">Asuc_0655</name>
</gene>
<proteinExistence type="inferred from homology"/>
<feature type="chain" id="PRO_1000073136" description="Uridylate kinase">
    <location>
        <begin position="1"/>
        <end position="237"/>
    </location>
</feature>
<feature type="region of interest" description="Involved in allosteric activation by GTP" evidence="1">
    <location>
        <begin position="20"/>
        <end position="25"/>
    </location>
</feature>
<feature type="binding site" evidence="1">
    <location>
        <begin position="12"/>
        <end position="15"/>
    </location>
    <ligand>
        <name>ATP</name>
        <dbReference type="ChEBI" id="CHEBI:30616"/>
    </ligand>
</feature>
<feature type="binding site" evidence="1">
    <location>
        <position position="54"/>
    </location>
    <ligand>
        <name>UMP</name>
        <dbReference type="ChEBI" id="CHEBI:57865"/>
    </ligand>
</feature>
<feature type="binding site" evidence="1">
    <location>
        <position position="55"/>
    </location>
    <ligand>
        <name>ATP</name>
        <dbReference type="ChEBI" id="CHEBI:30616"/>
    </ligand>
</feature>
<feature type="binding site" evidence="1">
    <location>
        <position position="59"/>
    </location>
    <ligand>
        <name>ATP</name>
        <dbReference type="ChEBI" id="CHEBI:30616"/>
    </ligand>
</feature>
<feature type="binding site" evidence="1">
    <location>
        <position position="74"/>
    </location>
    <ligand>
        <name>UMP</name>
        <dbReference type="ChEBI" id="CHEBI:57865"/>
    </ligand>
</feature>
<feature type="binding site" evidence="1">
    <location>
        <begin position="135"/>
        <end position="142"/>
    </location>
    <ligand>
        <name>UMP</name>
        <dbReference type="ChEBI" id="CHEBI:57865"/>
    </ligand>
</feature>
<feature type="binding site" evidence="1">
    <location>
        <position position="162"/>
    </location>
    <ligand>
        <name>ATP</name>
        <dbReference type="ChEBI" id="CHEBI:30616"/>
    </ligand>
</feature>
<feature type="binding site" evidence="1">
    <location>
        <position position="168"/>
    </location>
    <ligand>
        <name>ATP</name>
        <dbReference type="ChEBI" id="CHEBI:30616"/>
    </ligand>
</feature>
<feature type="binding site" evidence="1">
    <location>
        <position position="171"/>
    </location>
    <ligand>
        <name>ATP</name>
        <dbReference type="ChEBI" id="CHEBI:30616"/>
    </ligand>
</feature>
<keyword id="KW-0021">Allosteric enzyme</keyword>
<keyword id="KW-0067">ATP-binding</keyword>
<keyword id="KW-0963">Cytoplasm</keyword>
<keyword id="KW-0418">Kinase</keyword>
<keyword id="KW-0547">Nucleotide-binding</keyword>
<keyword id="KW-0665">Pyrimidine biosynthesis</keyword>
<keyword id="KW-1185">Reference proteome</keyword>
<keyword id="KW-0808">Transferase</keyword>
<comment type="function">
    <text evidence="1">Catalyzes the reversible phosphorylation of UMP to UDP.</text>
</comment>
<comment type="catalytic activity">
    <reaction evidence="1">
        <text>UMP + ATP = UDP + ADP</text>
        <dbReference type="Rhea" id="RHEA:24400"/>
        <dbReference type="ChEBI" id="CHEBI:30616"/>
        <dbReference type="ChEBI" id="CHEBI:57865"/>
        <dbReference type="ChEBI" id="CHEBI:58223"/>
        <dbReference type="ChEBI" id="CHEBI:456216"/>
        <dbReference type="EC" id="2.7.4.22"/>
    </reaction>
</comment>
<comment type="activity regulation">
    <text evidence="1">Allosterically activated by GTP. Inhibited by UTP.</text>
</comment>
<comment type="pathway">
    <text evidence="1">Pyrimidine metabolism; CTP biosynthesis via de novo pathway; UDP from UMP (UMPK route): step 1/1.</text>
</comment>
<comment type="subunit">
    <text evidence="1">Homohexamer.</text>
</comment>
<comment type="subcellular location">
    <subcellularLocation>
        <location evidence="1">Cytoplasm</location>
    </subcellularLocation>
</comment>
<comment type="similarity">
    <text evidence="1">Belongs to the UMP kinase family.</text>
</comment>
<protein>
    <recommendedName>
        <fullName evidence="1">Uridylate kinase</fullName>
        <shortName evidence="1">UK</shortName>
        <ecNumber evidence="1">2.7.4.22</ecNumber>
    </recommendedName>
    <alternativeName>
        <fullName evidence="1">Uridine monophosphate kinase</fullName>
        <shortName evidence="1">UMP kinase</shortName>
        <shortName evidence="1">UMPK</shortName>
    </alternativeName>
</protein>
<reference key="1">
    <citation type="journal article" date="2010" name="BMC Genomics">
        <title>A genomic perspective on the potential of Actinobacillus succinogenes for industrial succinate production.</title>
        <authorList>
            <person name="McKinlay J.B."/>
            <person name="Laivenieks M."/>
            <person name="Schindler B.D."/>
            <person name="McKinlay A.A."/>
            <person name="Siddaramappa S."/>
            <person name="Challacombe J.F."/>
            <person name="Lowry S.R."/>
            <person name="Clum A."/>
            <person name="Lapidus A.L."/>
            <person name="Burkhart K.B."/>
            <person name="Harkins V."/>
            <person name="Vieille C."/>
        </authorList>
    </citation>
    <scope>NUCLEOTIDE SEQUENCE [LARGE SCALE GENOMIC DNA]</scope>
    <source>
        <strain>ATCC 55618 / DSM 22257 / CCUG 43843 / 130Z</strain>
    </source>
</reference>
<sequence>MSNPIYKRILLKLSGEALQGAEGFGIDPSILDRMALEIKELIAMGVEVGVVLGGGNLFRGAKLAKAGMNRVVGDHMGMLATVMNGLAMRDALHRADVNAKLMSAFQLNGICDTYNWSEAIKMLREKRVVIFSGGTGSPFFTTDSAACLRGIEIEADVVLKATKVDGVYNCDPAKNPGAELFNTLTYADVIERELKVMDLAAFTLARDHGMPIRVFNMGKPGALREVVTGLTEGTIIS</sequence>
<organism>
    <name type="scientific">Actinobacillus succinogenes (strain ATCC 55618 / DSM 22257 / CCUG 43843 / 130Z)</name>
    <dbReference type="NCBI Taxonomy" id="339671"/>
    <lineage>
        <taxon>Bacteria</taxon>
        <taxon>Pseudomonadati</taxon>
        <taxon>Pseudomonadota</taxon>
        <taxon>Gammaproteobacteria</taxon>
        <taxon>Pasteurellales</taxon>
        <taxon>Pasteurellaceae</taxon>
        <taxon>Actinobacillus</taxon>
    </lineage>
</organism>
<dbReference type="EC" id="2.7.4.22" evidence="1"/>
<dbReference type="EMBL" id="CP000746">
    <property type="protein sequence ID" value="ABR74028.1"/>
    <property type="molecule type" value="Genomic_DNA"/>
</dbReference>
<dbReference type="RefSeq" id="WP_012072408.1">
    <property type="nucleotide sequence ID" value="NC_009655.1"/>
</dbReference>
<dbReference type="SMR" id="A6VM31"/>
<dbReference type="STRING" id="339671.Asuc_0655"/>
<dbReference type="KEGG" id="asu:Asuc_0655"/>
<dbReference type="eggNOG" id="COG0528">
    <property type="taxonomic scope" value="Bacteria"/>
</dbReference>
<dbReference type="HOGENOM" id="CLU_033861_0_0_6"/>
<dbReference type="OrthoDB" id="9807458at2"/>
<dbReference type="UniPathway" id="UPA00159">
    <property type="reaction ID" value="UER00275"/>
</dbReference>
<dbReference type="Proteomes" id="UP000001114">
    <property type="component" value="Chromosome"/>
</dbReference>
<dbReference type="GO" id="GO:0005829">
    <property type="term" value="C:cytosol"/>
    <property type="evidence" value="ECO:0007669"/>
    <property type="project" value="TreeGrafter"/>
</dbReference>
<dbReference type="GO" id="GO:0005524">
    <property type="term" value="F:ATP binding"/>
    <property type="evidence" value="ECO:0007669"/>
    <property type="project" value="UniProtKB-KW"/>
</dbReference>
<dbReference type="GO" id="GO:0033862">
    <property type="term" value="F:UMP kinase activity"/>
    <property type="evidence" value="ECO:0007669"/>
    <property type="project" value="UniProtKB-EC"/>
</dbReference>
<dbReference type="GO" id="GO:0044210">
    <property type="term" value="P:'de novo' CTP biosynthetic process"/>
    <property type="evidence" value="ECO:0007669"/>
    <property type="project" value="UniProtKB-UniRule"/>
</dbReference>
<dbReference type="GO" id="GO:0006225">
    <property type="term" value="P:UDP biosynthetic process"/>
    <property type="evidence" value="ECO:0007669"/>
    <property type="project" value="TreeGrafter"/>
</dbReference>
<dbReference type="CDD" id="cd04254">
    <property type="entry name" value="AAK_UMPK-PyrH-Ec"/>
    <property type="match status" value="1"/>
</dbReference>
<dbReference type="FunFam" id="3.40.1160.10:FF:000001">
    <property type="entry name" value="Uridylate kinase"/>
    <property type="match status" value="1"/>
</dbReference>
<dbReference type="Gene3D" id="3.40.1160.10">
    <property type="entry name" value="Acetylglutamate kinase-like"/>
    <property type="match status" value="1"/>
</dbReference>
<dbReference type="HAMAP" id="MF_01220_B">
    <property type="entry name" value="PyrH_B"/>
    <property type="match status" value="1"/>
</dbReference>
<dbReference type="InterPro" id="IPR036393">
    <property type="entry name" value="AceGlu_kinase-like_sf"/>
</dbReference>
<dbReference type="InterPro" id="IPR001048">
    <property type="entry name" value="Asp/Glu/Uridylate_kinase"/>
</dbReference>
<dbReference type="InterPro" id="IPR011817">
    <property type="entry name" value="Uridylate_kinase"/>
</dbReference>
<dbReference type="InterPro" id="IPR015963">
    <property type="entry name" value="Uridylate_kinase_bac"/>
</dbReference>
<dbReference type="NCBIfam" id="TIGR02075">
    <property type="entry name" value="pyrH_bact"/>
    <property type="match status" value="1"/>
</dbReference>
<dbReference type="PANTHER" id="PTHR42833">
    <property type="entry name" value="URIDYLATE KINASE"/>
    <property type="match status" value="1"/>
</dbReference>
<dbReference type="PANTHER" id="PTHR42833:SF4">
    <property type="entry name" value="URIDYLATE KINASE PUMPKIN, CHLOROPLASTIC"/>
    <property type="match status" value="1"/>
</dbReference>
<dbReference type="Pfam" id="PF00696">
    <property type="entry name" value="AA_kinase"/>
    <property type="match status" value="1"/>
</dbReference>
<dbReference type="PIRSF" id="PIRSF005650">
    <property type="entry name" value="Uridylate_kin"/>
    <property type="match status" value="1"/>
</dbReference>
<dbReference type="SUPFAM" id="SSF53633">
    <property type="entry name" value="Carbamate kinase-like"/>
    <property type="match status" value="1"/>
</dbReference>
<name>PYRH_ACTSZ</name>
<accession>A6VM31</accession>